<keyword id="KW-0997">Cell inner membrane</keyword>
<keyword id="KW-1003">Cell membrane</keyword>
<keyword id="KW-0472">Membrane</keyword>
<keyword id="KW-1185">Reference proteome</keyword>
<keyword id="KW-0812">Transmembrane</keyword>
<keyword id="KW-1133">Transmembrane helix</keyword>
<proteinExistence type="inferred from homology"/>
<sequence length="132" mass="14595">MSKTLNIIWQYLRAFVLIYACLYAGIFIASLLPVTIPGSIIGMLILFVLLALQILPAKWVNPGCYVLIRYMALLFVPIGVGVMQYFDLLRAQFGPVVVSCAVCTLVVFLVVSWSSQLVHGERKVVGQKGSEE</sequence>
<comment type="subcellular location">
    <subcellularLocation>
        <location evidence="1">Cell inner membrane</location>
        <topology evidence="1">Multi-pass membrane protein</topology>
    </subcellularLocation>
</comment>
<comment type="similarity">
    <text evidence="1">Belongs to the UPF0299 family.</text>
</comment>
<organism>
    <name type="scientific">Shigella boydii serotype 18 (strain CDC 3083-94 / BS512)</name>
    <dbReference type="NCBI Taxonomy" id="344609"/>
    <lineage>
        <taxon>Bacteria</taxon>
        <taxon>Pseudomonadati</taxon>
        <taxon>Pseudomonadota</taxon>
        <taxon>Gammaproteobacteria</taxon>
        <taxon>Enterobacterales</taxon>
        <taxon>Enterobacteriaceae</taxon>
        <taxon>Shigella</taxon>
    </lineage>
</organism>
<reference key="1">
    <citation type="submission" date="2008-05" db="EMBL/GenBank/DDBJ databases">
        <title>Complete sequence of Shigella boydii serotype 18 strain BS512.</title>
        <authorList>
            <person name="Rasko D.A."/>
            <person name="Rosovitz M."/>
            <person name="Maurelli A.T."/>
            <person name="Myers G."/>
            <person name="Seshadri R."/>
            <person name="Cer R."/>
            <person name="Jiang L."/>
            <person name="Ravel J."/>
            <person name="Sebastian Y."/>
        </authorList>
    </citation>
    <scope>NUCLEOTIDE SEQUENCE [LARGE SCALE GENOMIC DNA]</scope>
    <source>
        <strain>CDC 3083-94 / BS512</strain>
    </source>
</reference>
<feature type="chain" id="PRO_1000137375" description="UPF0299 membrane protein YohJ">
    <location>
        <begin position="1"/>
        <end position="132"/>
    </location>
</feature>
<feature type="transmembrane region" description="Helical" evidence="1">
    <location>
        <begin position="7"/>
        <end position="27"/>
    </location>
</feature>
<feature type="transmembrane region" description="Helical" evidence="1">
    <location>
        <begin position="31"/>
        <end position="51"/>
    </location>
</feature>
<feature type="transmembrane region" description="Helical" evidence="1">
    <location>
        <begin position="63"/>
        <end position="83"/>
    </location>
</feature>
<feature type="transmembrane region" description="Helical" evidence="1">
    <location>
        <begin position="93"/>
        <end position="113"/>
    </location>
</feature>
<evidence type="ECO:0000255" key="1">
    <source>
        <dbReference type="HAMAP-Rule" id="MF_01144"/>
    </source>
</evidence>
<name>YOHJ_SHIB3</name>
<gene>
    <name evidence="1" type="primary">yohJ</name>
    <name type="ordered locus">SbBS512_E0830</name>
</gene>
<accession>B2TVV4</accession>
<protein>
    <recommendedName>
        <fullName evidence="1">UPF0299 membrane protein YohJ</fullName>
    </recommendedName>
</protein>
<dbReference type="EMBL" id="CP001063">
    <property type="protein sequence ID" value="ACD07678.1"/>
    <property type="molecule type" value="Genomic_DNA"/>
</dbReference>
<dbReference type="RefSeq" id="WP_012421371.1">
    <property type="nucleotide sequence ID" value="NC_010658.1"/>
</dbReference>
<dbReference type="SMR" id="B2TVV4"/>
<dbReference type="STRING" id="344609.SbBS512_E0830"/>
<dbReference type="KEGG" id="sbc:SbBS512_E0830"/>
<dbReference type="HOGENOM" id="CLU_113736_1_1_6"/>
<dbReference type="Proteomes" id="UP000001030">
    <property type="component" value="Chromosome"/>
</dbReference>
<dbReference type="GO" id="GO:0005886">
    <property type="term" value="C:plasma membrane"/>
    <property type="evidence" value="ECO:0007669"/>
    <property type="project" value="UniProtKB-SubCell"/>
</dbReference>
<dbReference type="HAMAP" id="MF_01144">
    <property type="entry name" value="UPF0299"/>
    <property type="match status" value="1"/>
</dbReference>
<dbReference type="InterPro" id="IPR005538">
    <property type="entry name" value="LrgA/CidA"/>
</dbReference>
<dbReference type="InterPro" id="IPR022957">
    <property type="entry name" value="Uncharacterised_UPF0299"/>
</dbReference>
<dbReference type="NCBIfam" id="NF002494">
    <property type="entry name" value="PRK01821.1"/>
    <property type="match status" value="1"/>
</dbReference>
<dbReference type="PANTHER" id="PTHR33931">
    <property type="entry name" value="HOLIN-LIKE PROTEIN CIDA-RELATED"/>
    <property type="match status" value="1"/>
</dbReference>
<dbReference type="PANTHER" id="PTHR33931:SF5">
    <property type="entry name" value="UPF0299 MEMBRANE PROTEIN YOHJ"/>
    <property type="match status" value="1"/>
</dbReference>
<dbReference type="Pfam" id="PF03788">
    <property type="entry name" value="LrgA"/>
    <property type="match status" value="1"/>
</dbReference>